<accession>A7IPX7</accession>
<accession>Q9ZET2</accession>
<protein>
    <recommendedName>
        <fullName evidence="6">Alkene monooxygenase system, ferredoxin--NAD(+) reductase component</fullName>
        <ecNumber evidence="5">1.18.1.3</ecNumber>
    </recommendedName>
    <alternativeName>
        <fullName evidence="7">Alkene monooxygenase 35.5 kDa subunit</fullName>
    </alternativeName>
    <alternativeName>
        <fullName evidence="7">Alkene monooxygenase system, electron transfer component</fullName>
    </alternativeName>
    <alternativeName>
        <fullName evidence="8">Ferredoxin--NAD(+) reductase</fullName>
    </alternativeName>
</protein>
<reference key="1">
    <citation type="journal article" date="1999" name="Appl. Environ. Microbiol.">
        <title>The alkene monooxygenase from Xanthobacter strain Py2 is closely related to aromatic monooxygenases and catalyzes aromatic monohydroxylation of benzene, toluene, and phenol.</title>
        <authorList>
            <person name="Zhou N.Y."/>
            <person name="Jenkins A."/>
            <person name="Chan Kwo Chion C.K."/>
            <person name="Leak D.J."/>
        </authorList>
    </citation>
    <scope>NUCLEOTIDE SEQUENCE [GENOMIC DNA]</scope>
    <scope>FUNCTION</scope>
    <source>
        <strain evidence="11">ATCC BAA-1158 / Py2</strain>
    </source>
</reference>
<reference key="2">
    <citation type="submission" date="2007-07" db="EMBL/GenBank/DDBJ databases">
        <title>Complete sequence of plasmid pXAUT01 of Xanthobacter autotrophicus Py2.</title>
        <authorList>
            <consortium name="US DOE Joint Genome Institute"/>
            <person name="Copeland A."/>
            <person name="Lucas S."/>
            <person name="Lapidus A."/>
            <person name="Barry K."/>
            <person name="Glavina del Rio T."/>
            <person name="Hammon N."/>
            <person name="Israni S."/>
            <person name="Dalin E."/>
            <person name="Tice H."/>
            <person name="Pitluck S."/>
            <person name="Sims D."/>
            <person name="Brettin T."/>
            <person name="Bruce D."/>
            <person name="Detter J.C."/>
            <person name="Han C."/>
            <person name="Tapia R."/>
            <person name="Brainard J."/>
            <person name="Schmutz J."/>
            <person name="Larimer F."/>
            <person name="Land M."/>
            <person name="Hauser L."/>
            <person name="Kyrpides N."/>
            <person name="Kim E."/>
            <person name="Ensigns S.A."/>
            <person name="Richardson P."/>
        </authorList>
    </citation>
    <scope>NUCLEOTIDE SEQUENCE [LARGE SCALE GENOMIC DNA]</scope>
    <source>
        <strain evidence="12">ATCC BAA-1158 / Py2</strain>
        <plasmid evidence="10">pXAUT01</plasmid>
    </source>
</reference>
<reference key="3">
    <citation type="journal article" date="1996" name="Appl. Environ. Microbiol.">
        <title>Aliphatic and chlorinated alkenes and epoxides as inducers of alkene monooxygenase and epoxidase activities in Xanthobacter strain Py2.</title>
        <authorList>
            <person name="Ensign S.A."/>
        </authorList>
    </citation>
    <scope>INDUCTION</scope>
    <source>
        <strain>ATCC BAA-1158 / Py2</strain>
    </source>
</reference>
<reference key="4">
    <citation type="journal article" date="1997" name="J. Biol. Chem.">
        <title>Alkene monooxygenase from Xanthobacter strain Py2. Purification and characterization of a four-component system central to the bacterial metabolism of aliphatic alkenes.</title>
        <authorList>
            <person name="Small F.J."/>
            <person name="Ensign S.A."/>
        </authorList>
    </citation>
    <scope>FUNCTION</scope>
    <scope>CATALYTIC ACTIVITY</scope>
    <scope>COFACTOR</scope>
    <scope>SUBCELLULAR LOCATION</scope>
    <scope>SUBSTRATE SPECIFICITY</scope>
    <scope>SUBUNIT</scope>
    <source>
        <strain>ATCC BAA-1158 / Py2</strain>
    </source>
</reference>
<dbReference type="EC" id="1.18.1.3" evidence="5"/>
<dbReference type="EMBL" id="AJ012090">
    <property type="protein sequence ID" value="CAA09916.1"/>
    <property type="molecule type" value="Genomic_DNA"/>
</dbReference>
<dbReference type="EMBL" id="CP000782">
    <property type="protein sequence ID" value="ABS70073.1"/>
    <property type="status" value="ALT_INIT"/>
    <property type="molecule type" value="Genomic_DNA"/>
</dbReference>
<dbReference type="SMR" id="A7IPX7"/>
<dbReference type="KEGG" id="xau:Xaut_4862"/>
<dbReference type="eggNOG" id="COG0543">
    <property type="taxonomic scope" value="Bacteria"/>
</dbReference>
<dbReference type="eggNOG" id="COG1018">
    <property type="taxonomic scope" value="Bacteria"/>
</dbReference>
<dbReference type="HOGENOM" id="CLU_003827_7_0_5"/>
<dbReference type="PhylomeDB" id="A7IPX7"/>
<dbReference type="Proteomes" id="UP000002417">
    <property type="component" value="Plasmid pXAUT01"/>
</dbReference>
<dbReference type="GO" id="GO:0005737">
    <property type="term" value="C:cytoplasm"/>
    <property type="evidence" value="ECO:0007669"/>
    <property type="project" value="UniProtKB-SubCell"/>
</dbReference>
<dbReference type="GO" id="GO:0051537">
    <property type="term" value="F:2 iron, 2 sulfur cluster binding"/>
    <property type="evidence" value="ECO:0007669"/>
    <property type="project" value="UniProtKB-KW"/>
</dbReference>
<dbReference type="GO" id="GO:0008860">
    <property type="term" value="F:ferredoxin-NAD+ reductase activity"/>
    <property type="evidence" value="ECO:0007669"/>
    <property type="project" value="UniProtKB-EC"/>
</dbReference>
<dbReference type="GO" id="GO:0046872">
    <property type="term" value="F:metal ion binding"/>
    <property type="evidence" value="ECO:0007669"/>
    <property type="project" value="UniProtKB-KW"/>
</dbReference>
<dbReference type="CDD" id="cd00207">
    <property type="entry name" value="fer2"/>
    <property type="match status" value="1"/>
</dbReference>
<dbReference type="CDD" id="cd06190">
    <property type="entry name" value="T4MO_e_transfer_like"/>
    <property type="match status" value="1"/>
</dbReference>
<dbReference type="Gene3D" id="3.10.20.30">
    <property type="match status" value="1"/>
</dbReference>
<dbReference type="Gene3D" id="3.40.50.80">
    <property type="entry name" value="Nucleotide-binding domain of ferredoxin-NADP reductase (FNR) module"/>
    <property type="match status" value="1"/>
</dbReference>
<dbReference type="Gene3D" id="2.40.30.10">
    <property type="entry name" value="Translation factors"/>
    <property type="match status" value="1"/>
</dbReference>
<dbReference type="InterPro" id="IPR036010">
    <property type="entry name" value="2Fe-2S_ferredoxin-like_sf"/>
</dbReference>
<dbReference type="InterPro" id="IPR001041">
    <property type="entry name" value="2Fe-2S_ferredoxin-type"/>
</dbReference>
<dbReference type="InterPro" id="IPR006058">
    <property type="entry name" value="2Fe2S_fd_BS"/>
</dbReference>
<dbReference type="InterPro" id="IPR012675">
    <property type="entry name" value="Beta-grasp_dom_sf"/>
</dbReference>
<dbReference type="InterPro" id="IPR008333">
    <property type="entry name" value="Cbr1-like_FAD-bd_dom"/>
</dbReference>
<dbReference type="InterPro" id="IPR017927">
    <property type="entry name" value="FAD-bd_FR_type"/>
</dbReference>
<dbReference type="InterPro" id="IPR039261">
    <property type="entry name" value="FNR_nucleotide-bd"/>
</dbReference>
<dbReference type="InterPro" id="IPR050415">
    <property type="entry name" value="MRET"/>
</dbReference>
<dbReference type="InterPro" id="IPR001433">
    <property type="entry name" value="OxRdtase_FAD/NAD-bd"/>
</dbReference>
<dbReference type="InterPro" id="IPR017938">
    <property type="entry name" value="Riboflavin_synthase-like_b-brl"/>
</dbReference>
<dbReference type="PANTHER" id="PTHR47354">
    <property type="entry name" value="NADH OXIDOREDUCTASE HCR"/>
    <property type="match status" value="1"/>
</dbReference>
<dbReference type="PANTHER" id="PTHR47354:SF5">
    <property type="entry name" value="PROTEIN RFBI"/>
    <property type="match status" value="1"/>
</dbReference>
<dbReference type="Pfam" id="PF00970">
    <property type="entry name" value="FAD_binding_6"/>
    <property type="match status" value="1"/>
</dbReference>
<dbReference type="Pfam" id="PF00111">
    <property type="entry name" value="Fer2"/>
    <property type="match status" value="1"/>
</dbReference>
<dbReference type="Pfam" id="PF00175">
    <property type="entry name" value="NAD_binding_1"/>
    <property type="match status" value="1"/>
</dbReference>
<dbReference type="PRINTS" id="PR00410">
    <property type="entry name" value="PHEHYDRXLASE"/>
</dbReference>
<dbReference type="SUPFAM" id="SSF54292">
    <property type="entry name" value="2Fe-2S ferredoxin-like"/>
    <property type="match status" value="1"/>
</dbReference>
<dbReference type="SUPFAM" id="SSF52343">
    <property type="entry name" value="Ferredoxin reductase-like, C-terminal NADP-linked domain"/>
    <property type="match status" value="1"/>
</dbReference>
<dbReference type="SUPFAM" id="SSF63380">
    <property type="entry name" value="Riboflavin synthase domain-like"/>
    <property type="match status" value="1"/>
</dbReference>
<dbReference type="PROSITE" id="PS00197">
    <property type="entry name" value="2FE2S_FER_1"/>
    <property type="match status" value="1"/>
</dbReference>
<dbReference type="PROSITE" id="PS51085">
    <property type="entry name" value="2FE2S_FER_2"/>
    <property type="match status" value="1"/>
</dbReference>
<dbReference type="PROSITE" id="PS51384">
    <property type="entry name" value="FAD_FR"/>
    <property type="match status" value="1"/>
</dbReference>
<proteinExistence type="evidence at protein level"/>
<comment type="function">
    <text evidence="3 5">Reductase component of the alkene monooxygenase multicomponent enzyme system which catalyzes the O2- and NADH-dependent epoxidation of short chain (C2 to C6) alkenes to their corresponding epoxides (PubMed:10103255, PubMed:9312093). Ferredoxin reductase catalyzes the transfer of electrons from NADH to ferredoxin (XamoC) (PubMed:9312093). NADPH is also effective but with a rate approximately 3-fold lower than with NADH (PubMed:9312093).</text>
</comment>
<comment type="catalytic activity">
    <reaction evidence="5">
        <text>2 reduced [2Fe-2S]-[ferredoxin] + NAD(+) + H(+) = 2 oxidized [2Fe-2S]-[ferredoxin] + NADH</text>
        <dbReference type="Rhea" id="RHEA:16521"/>
        <dbReference type="Rhea" id="RHEA-COMP:10000"/>
        <dbReference type="Rhea" id="RHEA-COMP:10001"/>
        <dbReference type="ChEBI" id="CHEBI:15378"/>
        <dbReference type="ChEBI" id="CHEBI:33737"/>
        <dbReference type="ChEBI" id="CHEBI:33738"/>
        <dbReference type="ChEBI" id="CHEBI:57540"/>
        <dbReference type="ChEBI" id="CHEBI:57945"/>
        <dbReference type="EC" id="1.18.1.3"/>
    </reaction>
</comment>
<comment type="cofactor">
    <cofactor evidence="5">
        <name>FAD</name>
        <dbReference type="ChEBI" id="CHEBI:57692"/>
    </cofactor>
</comment>
<comment type="cofactor">
    <cofactor evidence="5">
        <name>[2Fe-2S] cluster</name>
        <dbReference type="ChEBI" id="CHEBI:190135"/>
    </cofactor>
    <text evidence="1">Binds 1 2Fe-2S cluster.</text>
</comment>
<comment type="subunit">
    <text evidence="5">Monomer. The alkene monooxygenase multicomponent enzyme system is composed of an electron transfer component and a monooxygenase component interacting with the effector protein XamoD. The electron transfer component is composed of a ferredoxin reductase (XamoF) and a ferredoxin (XamoC), and the monooxygenase component is formed by a heterohexamer (dimer of heterotrimers) of two alpha subunits (XamoA), two beta subunits (XamoE) and two gamma subunits (XamoB).</text>
</comment>
<comment type="subcellular location">
    <subcellularLocation>
        <location evidence="9">Cytoplasm</location>
    </subcellularLocation>
</comment>
<comment type="induction">
    <text evidence="4">Induced during growth on aliphatic alkenes (such as propylene, ethylene and 1-butylene), epoxides (such as propylene oxide and 1,2-epoxybutane) and chlorinated alkenes and epoxides (such as vinyl chloride, cis- and trans-1,2-dichloroethylene, 1-chloropropylene, 1,3-dichloropropylene, epichlorohydrin, and epifluorohydrin). Repressed during growth on other carbon sources.</text>
</comment>
<comment type="similarity">
    <text evidence="8">Belongs to the bacterial ring-hydroxylating dioxygenase ferredoxin reductase family.</text>
</comment>
<comment type="sequence caution" evidence="8">
    <conflict type="erroneous initiation">
        <sequence resource="EMBL-CDS" id="ABS70073"/>
    </conflict>
    <text>Extended N-terminus.</text>
</comment>
<feature type="chain" id="PRO_0000442696" description="Alkene monooxygenase system, ferredoxin--NAD(+) reductase component">
    <location>
        <begin position="1"/>
        <end position="327"/>
    </location>
</feature>
<feature type="domain" description="2Fe-2S ferredoxin-type" evidence="1">
    <location>
        <begin position="1"/>
        <end position="89"/>
    </location>
</feature>
<feature type="domain" description="FAD-binding FR-type" evidence="2">
    <location>
        <begin position="96"/>
        <end position="194"/>
    </location>
</feature>
<feature type="binding site" evidence="1">
    <location>
        <position position="32"/>
    </location>
    <ligand>
        <name>[2Fe-2S] cluster</name>
        <dbReference type="ChEBI" id="CHEBI:190135"/>
    </ligand>
</feature>
<feature type="binding site" evidence="1">
    <location>
        <position position="37"/>
    </location>
    <ligand>
        <name>[2Fe-2S] cluster</name>
        <dbReference type="ChEBI" id="CHEBI:190135"/>
    </ligand>
</feature>
<feature type="binding site" evidence="1">
    <location>
        <position position="40"/>
    </location>
    <ligand>
        <name>[2Fe-2S] cluster</name>
        <dbReference type="ChEBI" id="CHEBI:190135"/>
    </ligand>
</feature>
<feature type="binding site" evidence="1">
    <location>
        <position position="73"/>
    </location>
    <ligand>
        <name>[2Fe-2S] cluster</name>
        <dbReference type="ChEBI" id="CHEBI:190135"/>
    </ligand>
</feature>
<keyword id="KW-0001">2Fe-2S</keyword>
<keyword id="KW-0963">Cytoplasm</keyword>
<keyword id="KW-0274">FAD</keyword>
<keyword id="KW-0285">Flavoprotein</keyword>
<keyword id="KW-0408">Iron</keyword>
<keyword id="KW-0411">Iron-sulfur</keyword>
<keyword id="KW-0479">Metal-binding</keyword>
<keyword id="KW-0520">NAD</keyword>
<keyword id="KW-0560">Oxidoreductase</keyword>
<keyword id="KW-0614">Plasmid</keyword>
<keyword id="KW-1185">Reference proteome</keyword>
<evidence type="ECO:0000255" key="1">
    <source>
        <dbReference type="PROSITE-ProRule" id="PRU00465"/>
    </source>
</evidence>
<evidence type="ECO:0000255" key="2">
    <source>
        <dbReference type="PROSITE-ProRule" id="PRU00716"/>
    </source>
</evidence>
<evidence type="ECO:0000269" key="3">
    <source>
    </source>
</evidence>
<evidence type="ECO:0000269" key="4">
    <source>
    </source>
</evidence>
<evidence type="ECO:0000269" key="5">
    <source>
    </source>
</evidence>
<evidence type="ECO:0000303" key="6">
    <source>
    </source>
</evidence>
<evidence type="ECO:0000303" key="7">
    <source>
    </source>
</evidence>
<evidence type="ECO:0000305" key="8"/>
<evidence type="ECO:0000305" key="9">
    <source>
    </source>
</evidence>
<evidence type="ECO:0000312" key="10">
    <source>
        <dbReference type="EMBL" id="ABS70073.1"/>
    </source>
</evidence>
<evidence type="ECO:0000312" key="11">
    <source>
        <dbReference type="EMBL" id="CAA09916.1"/>
    </source>
</evidence>
<evidence type="ECO:0000312" key="12">
    <source>
        <dbReference type="Proteomes" id="UP000002417"/>
    </source>
</evidence>
<geneLocation type="plasmid" evidence="10 12">
    <name>pXAUT01</name>
</geneLocation>
<name>XAMOF_XANP2</name>
<organism>
    <name type="scientific">Xanthobacter autotrophicus (strain ATCC BAA-1158 / Py2)</name>
    <dbReference type="NCBI Taxonomy" id="78245"/>
    <lineage>
        <taxon>Bacteria</taxon>
        <taxon>Pseudomonadati</taxon>
        <taxon>Pseudomonadota</taxon>
        <taxon>Alphaproteobacteria</taxon>
        <taxon>Hyphomicrobiales</taxon>
        <taxon>Xanthobacteraceae</taxon>
        <taxon>Xanthobacter</taxon>
    </lineage>
</organism>
<sequence>MRLNDGRSFSCRSDQTVLHAALAAGIDMPYECASGSCGSCRCRLSHGSVSLLWPEAPGLSARDRQKGDRILACQSTPSSDLEINVRAGDALLEPPPRRHAARVTVKETLCASVIRLVLNVGGPIHFLPGQFFILDLPGAGRRAYSVANLENAAGGIELLIKRKIGGAGTAALFDQCAPGMGLVIEGPYGRAYLRADSARGIVAVAGGSGLAPMLSILRGALARGFGGPMDLYFGVNTAEELFCVPELSALQAAGARVHLALRDGGPGPAGLHRQAGLIGDALVAGEPDLKAKDLYVAGPAPMTDDILARTVRQEAIPADRVFFDRFV</sequence>
<gene>
    <name evidence="6 11" type="primary">xamoF</name>
    <name evidence="6" type="synonym">aamF</name>
    <name evidence="10" type="ordered locus">Xaut_4862</name>
</gene>